<feature type="chain" id="PRO_0000183203" description="UDP-glucose 4-epimerase">
    <location>
        <begin position="1"/>
        <end position="338"/>
    </location>
</feature>
<feature type="active site" description="Proton acceptor" evidence="6">
    <location>
        <position position="149"/>
    </location>
</feature>
<feature type="binding site" evidence="1 3 6 7 9 10 11 12 13">
    <location>
        <begin position="11"/>
        <end position="12"/>
    </location>
    <ligand>
        <name>NAD(+)</name>
        <dbReference type="ChEBI" id="CHEBI:57540"/>
    </ligand>
</feature>
<feature type="binding site" evidence="1 3 6 7 9 10 11 12 13">
    <location>
        <begin position="31"/>
        <end position="36"/>
    </location>
    <ligand>
        <name>NAD(+)</name>
        <dbReference type="ChEBI" id="CHEBI:57540"/>
    </ligand>
</feature>
<feature type="binding site" evidence="1 3 6 7 9 10 11 12 13">
    <location>
        <begin position="58"/>
        <end position="59"/>
    </location>
    <ligand>
        <name>NAD(+)</name>
        <dbReference type="ChEBI" id="CHEBI:57540"/>
    </ligand>
</feature>
<feature type="binding site" evidence="1 3 6 7 9 10 11 12 13">
    <location>
        <begin position="80"/>
        <end position="84"/>
    </location>
    <ligand>
        <name>NAD(+)</name>
        <dbReference type="ChEBI" id="CHEBI:57540"/>
    </ligand>
</feature>
<feature type="binding site" evidence="1 3 6 7 9 10 11 12 13">
    <location>
        <position position="99"/>
    </location>
    <ligand>
        <name>NAD(+)</name>
        <dbReference type="ChEBI" id="CHEBI:57540"/>
    </ligand>
</feature>
<feature type="binding site" evidence="1 3 6 7 9 10 11 12 13">
    <location>
        <position position="124"/>
    </location>
    <ligand>
        <name>NAD(+)</name>
        <dbReference type="ChEBI" id="CHEBI:57540"/>
    </ligand>
</feature>
<feature type="binding site">
    <location>
        <position position="124"/>
    </location>
    <ligand>
        <name>substrate</name>
    </ligand>
</feature>
<feature type="binding site" evidence="1 3 6 7 9 10 11 12 13">
    <location>
        <position position="149"/>
    </location>
    <ligand>
        <name>NAD(+)</name>
        <dbReference type="ChEBI" id="CHEBI:57540"/>
    </ligand>
</feature>
<feature type="binding site">
    <location>
        <position position="149"/>
    </location>
    <ligand>
        <name>substrate</name>
    </ligand>
</feature>
<feature type="binding site" evidence="1 3 6 7 9 10 11 12 13">
    <location>
        <position position="153"/>
    </location>
    <ligand>
        <name>NAD(+)</name>
        <dbReference type="ChEBI" id="CHEBI:57540"/>
    </ligand>
</feature>
<feature type="binding site" evidence="1 3 6 7 9 10 11 12 13">
    <location>
        <position position="178"/>
    </location>
    <ligand>
        <name>NAD(+)</name>
        <dbReference type="ChEBI" id="CHEBI:57540"/>
    </ligand>
</feature>
<feature type="binding site">
    <location>
        <position position="179"/>
    </location>
    <ligand>
        <name>substrate</name>
    </ligand>
</feature>
<feature type="binding site">
    <location>
        <begin position="199"/>
        <end position="200"/>
    </location>
    <ligand>
        <name>substrate</name>
    </ligand>
</feature>
<feature type="binding site">
    <location>
        <begin position="216"/>
        <end position="218"/>
    </location>
    <ligand>
        <name>substrate</name>
    </ligand>
</feature>
<feature type="binding site">
    <location>
        <position position="231"/>
    </location>
    <ligand>
        <name>substrate</name>
    </ligand>
</feature>
<feature type="binding site">
    <location>
        <begin position="292"/>
        <end position="295"/>
    </location>
    <ligand>
        <name>substrate</name>
    </ligand>
</feature>
<feature type="binding site">
    <location>
        <position position="299"/>
    </location>
    <ligand>
        <name>substrate</name>
    </ligand>
</feature>
<feature type="mutagenesis site" description="No major structural changes. Catalytic efficiency is very low and affinity binding is 21% of the wild-type enzyme." evidence="11 12 13">
    <original>S</original>
    <variation>A</variation>
    <location>
        <position position="124"/>
    </location>
</feature>
<feature type="mutagenesis site" description="No major structural changes. Catalytic efficiency is about 30% of that of the wild-type enzyme, and affinity binding is similar to that of the native enzyme." evidence="11 12 13">
    <original>S</original>
    <variation>T</variation>
    <location>
        <position position="124"/>
    </location>
</feature>
<feature type="mutagenesis site" description="No major structural changes. Catalytic efficiency is very low and affinity binding is 12% of the wild-type enzyme." evidence="11 13">
    <original>Y</original>
    <variation>F</variation>
    <location>
        <position position="149"/>
    </location>
</feature>
<feature type="mutagenesis site" description="Decreases the catalytic activity. Not reduced by sugars in the presence or absence of UMP. It contains very little NADH." evidence="5">
    <original>K</original>
    <variation>A</variation>
    <location>
        <position position="153"/>
    </location>
</feature>
<feature type="mutagenesis site" description="Decreases the catalytic activity. Not reduced by sugars in the presence or absence of UMP. It contains very little NADH." evidence="5">
    <original>K</original>
    <variation>M</variation>
    <location>
        <position position="153"/>
    </location>
</feature>
<feature type="mutagenesis site" description="Loss of epimerase activity with UDP-Gal by almost 5-fold, but it results in a gain of epimerase activity with uridine diphosphate N-acetylglucosamine (UDP-GlcNAc) by 230-fold with minimal changes in its three-dimensional structure." evidence="1">
    <original>Y</original>
    <variation>C</variation>
    <location>
        <position position="299"/>
    </location>
</feature>
<feature type="sequence conflict" description="In Ref. 6; CAA35813." evidence="14" ref="6">
    <original>FPTGTP</original>
    <variation>LLPIPG</variation>
    <location>
        <begin position="140"/>
        <end position="145"/>
    </location>
</feature>
<feature type="strand" evidence="15">
    <location>
        <begin position="2"/>
        <end position="6"/>
    </location>
</feature>
<feature type="turn" evidence="15">
    <location>
        <begin position="7"/>
        <end position="9"/>
    </location>
</feature>
<feature type="helix" evidence="15">
    <location>
        <begin position="11"/>
        <end position="22"/>
    </location>
</feature>
<feature type="strand" evidence="15">
    <location>
        <begin position="26"/>
        <end position="31"/>
    </location>
</feature>
<feature type="strand" evidence="15">
    <location>
        <begin position="34"/>
        <end position="36"/>
    </location>
</feature>
<feature type="helix" evidence="15">
    <location>
        <begin position="38"/>
        <end position="40"/>
    </location>
</feature>
<feature type="helix" evidence="15">
    <location>
        <begin position="41"/>
        <end position="48"/>
    </location>
</feature>
<feature type="strand" evidence="15">
    <location>
        <begin position="53"/>
        <end position="56"/>
    </location>
</feature>
<feature type="helix" evidence="15">
    <location>
        <begin position="62"/>
        <end position="71"/>
    </location>
</feature>
<feature type="strand" evidence="15">
    <location>
        <begin position="75"/>
        <end position="79"/>
    </location>
</feature>
<feature type="helix" evidence="15">
    <location>
        <begin position="86"/>
        <end position="91"/>
    </location>
</feature>
<feature type="helix" evidence="15">
    <location>
        <begin position="93"/>
        <end position="114"/>
    </location>
</feature>
<feature type="strand" evidence="15">
    <location>
        <begin position="118"/>
        <end position="124"/>
    </location>
</feature>
<feature type="helix" evidence="15">
    <location>
        <begin position="125"/>
        <end position="128"/>
    </location>
</feature>
<feature type="strand" evidence="15">
    <location>
        <begin position="134"/>
        <end position="136"/>
    </location>
</feature>
<feature type="helix" evidence="15">
    <location>
        <begin position="148"/>
        <end position="166"/>
    </location>
</feature>
<feature type="strand" evidence="15">
    <location>
        <begin position="171"/>
        <end position="177"/>
    </location>
</feature>
<feature type="strand" evidence="15">
    <location>
        <begin position="179"/>
        <end position="181"/>
    </location>
</feature>
<feature type="strand" evidence="15">
    <location>
        <begin position="187"/>
        <end position="189"/>
    </location>
</feature>
<feature type="strand" evidence="15">
    <location>
        <begin position="194"/>
        <end position="196"/>
    </location>
</feature>
<feature type="helix" evidence="15">
    <location>
        <begin position="200"/>
        <end position="208"/>
    </location>
</feature>
<feature type="strand" evidence="15">
    <location>
        <begin position="211"/>
        <end position="213"/>
    </location>
</feature>
<feature type="strand" evidence="15">
    <location>
        <begin position="215"/>
        <end position="218"/>
    </location>
</feature>
<feature type="strand" evidence="15">
    <location>
        <begin position="222"/>
        <end position="224"/>
    </location>
</feature>
<feature type="strand" evidence="15">
    <location>
        <begin position="233"/>
        <end position="235"/>
    </location>
</feature>
<feature type="helix" evidence="15">
    <location>
        <begin position="236"/>
        <end position="250"/>
    </location>
</feature>
<feature type="strand" evidence="15">
    <location>
        <begin position="255"/>
        <end position="262"/>
    </location>
</feature>
<feature type="helix" evidence="15">
    <location>
        <begin position="269"/>
        <end position="280"/>
    </location>
</feature>
<feature type="strand" evidence="15">
    <location>
        <begin position="286"/>
        <end position="289"/>
    </location>
</feature>
<feature type="helix" evidence="15">
    <location>
        <begin position="304"/>
        <end position="310"/>
    </location>
</feature>
<feature type="helix" evidence="15">
    <location>
        <begin position="318"/>
        <end position="331"/>
    </location>
</feature>
<sequence length="338" mass="37265">MRVLVTGGSGYIGSHTCVQLLQNGHDVIILDNLCNSKRSVLPVIERLGGKHPTFVEGDIRNEALMTEILHDHAIDTVIHFAGLKAVGESVQKPLEYYDNNVNGTLRLISAMRAANVKNFIFSSSATVYGDQPKIPYVESFPTGTPQSPYGKSKLMVEQILTDLQKAQPDWSIALLRYFNPVGAHPSGDMGEDPQGIPNNLMPYIAQVAVGRRDSLAIFGNDYPTEDGTGVRDYIHVMDLADGHVVAMEKLANKPGVHIYNLGAGVGNSVLDVVNAFSKACGKPVNYHFAPRREGDLPAYWADASKADRELNWRVTRTLDEMAQDTWHWQSRHPQGYPD</sequence>
<dbReference type="EC" id="5.1.3.2"/>
<dbReference type="EMBL" id="X06226">
    <property type="protein sequence ID" value="CAA29573.1"/>
    <property type="molecule type" value="Genomic_DNA"/>
</dbReference>
<dbReference type="EMBL" id="U00096">
    <property type="protein sequence ID" value="AAC73846.1"/>
    <property type="molecule type" value="Genomic_DNA"/>
</dbReference>
<dbReference type="EMBL" id="AP009048">
    <property type="protein sequence ID" value="BAA35421.1"/>
    <property type="molecule type" value="Genomic_DNA"/>
</dbReference>
<dbReference type="EMBL" id="X51449">
    <property type="protein sequence ID" value="CAA35813.1"/>
    <property type="molecule type" value="Genomic_DNA"/>
</dbReference>
<dbReference type="EMBL" id="U07867">
    <property type="protein sequence ID" value="AAB06890.1"/>
    <property type="molecule type" value="Genomic_DNA"/>
</dbReference>
<dbReference type="EMBL" id="J01613">
    <property type="protein sequence ID" value="AAA87978.1"/>
    <property type="molecule type" value="Genomic_DNA"/>
</dbReference>
<dbReference type="PIR" id="S02089">
    <property type="entry name" value="XUECUG"/>
</dbReference>
<dbReference type="RefSeq" id="NP_415280.3">
    <property type="nucleotide sequence ID" value="NC_000913.3"/>
</dbReference>
<dbReference type="RefSeq" id="WP_001265438.1">
    <property type="nucleotide sequence ID" value="NZ_STEB01000028.1"/>
</dbReference>
<dbReference type="PDB" id="1A9Y">
    <property type="method" value="X-ray"/>
    <property type="resolution" value="1.80 A"/>
    <property type="chains" value="A=1-338"/>
</dbReference>
<dbReference type="PDB" id="1A9Z">
    <property type="method" value="X-ray"/>
    <property type="resolution" value="1.90 A"/>
    <property type="chains" value="A=1-338"/>
</dbReference>
<dbReference type="PDB" id="1KVQ">
    <property type="method" value="X-ray"/>
    <property type="resolution" value="2.15 A"/>
    <property type="chains" value="A=1-338"/>
</dbReference>
<dbReference type="PDB" id="1KVR">
    <property type="method" value="X-ray"/>
    <property type="resolution" value="1.90 A"/>
    <property type="chains" value="A=1-338"/>
</dbReference>
<dbReference type="PDB" id="1KVS">
    <property type="method" value="X-ray"/>
    <property type="resolution" value="2.15 A"/>
    <property type="chains" value="A=1-338"/>
</dbReference>
<dbReference type="PDB" id="1KVT">
    <property type="method" value="X-ray"/>
    <property type="resolution" value="2.15 A"/>
    <property type="chains" value="A=1-338"/>
</dbReference>
<dbReference type="PDB" id="1KVU">
    <property type="method" value="X-ray"/>
    <property type="resolution" value="1.90 A"/>
    <property type="chains" value="A=1-338"/>
</dbReference>
<dbReference type="PDB" id="1LRJ">
    <property type="method" value="X-ray"/>
    <property type="resolution" value="1.90 A"/>
    <property type="chains" value="A=1-338"/>
</dbReference>
<dbReference type="PDB" id="1LRK">
    <property type="method" value="X-ray"/>
    <property type="resolution" value="1.75 A"/>
    <property type="chains" value="A=1-338"/>
</dbReference>
<dbReference type="PDB" id="1LRL">
    <property type="method" value="X-ray"/>
    <property type="resolution" value="1.80 A"/>
    <property type="chains" value="A=1-338"/>
</dbReference>
<dbReference type="PDB" id="1NAH">
    <property type="method" value="X-ray"/>
    <property type="resolution" value="1.80 A"/>
    <property type="chains" value="A=1-338"/>
</dbReference>
<dbReference type="PDB" id="1NAI">
    <property type="method" value="X-ray"/>
    <property type="resolution" value="2.00 A"/>
    <property type="chains" value="A=1-338"/>
</dbReference>
<dbReference type="PDB" id="1UDA">
    <property type="method" value="X-ray"/>
    <property type="resolution" value="1.80 A"/>
    <property type="chains" value="A=1-338"/>
</dbReference>
<dbReference type="PDB" id="1UDB">
    <property type="method" value="X-ray"/>
    <property type="resolution" value="1.65 A"/>
    <property type="chains" value="A=1-338"/>
</dbReference>
<dbReference type="PDB" id="1UDC">
    <property type="method" value="X-ray"/>
    <property type="resolution" value="1.65 A"/>
    <property type="chains" value="A=1-338"/>
</dbReference>
<dbReference type="PDB" id="1XEL">
    <property type="method" value="X-ray"/>
    <property type="resolution" value="1.80 A"/>
    <property type="chains" value="A=1-338"/>
</dbReference>
<dbReference type="PDB" id="2UDP">
    <property type="method" value="X-ray"/>
    <property type="resolution" value="1.80 A"/>
    <property type="chains" value="A/B=1-338"/>
</dbReference>
<dbReference type="PDB" id="5GY7">
    <property type="method" value="X-ray"/>
    <property type="resolution" value="1.43 A"/>
    <property type="chains" value="A/B=1-338"/>
</dbReference>
<dbReference type="PDBsum" id="1A9Y"/>
<dbReference type="PDBsum" id="1A9Z"/>
<dbReference type="PDBsum" id="1KVQ"/>
<dbReference type="PDBsum" id="1KVR"/>
<dbReference type="PDBsum" id="1KVS"/>
<dbReference type="PDBsum" id="1KVT"/>
<dbReference type="PDBsum" id="1KVU"/>
<dbReference type="PDBsum" id="1LRJ"/>
<dbReference type="PDBsum" id="1LRK"/>
<dbReference type="PDBsum" id="1LRL"/>
<dbReference type="PDBsum" id="1NAH"/>
<dbReference type="PDBsum" id="1NAI"/>
<dbReference type="PDBsum" id="1UDA"/>
<dbReference type="PDBsum" id="1UDB"/>
<dbReference type="PDBsum" id="1UDC"/>
<dbReference type="PDBsum" id="1XEL"/>
<dbReference type="PDBsum" id="2UDP"/>
<dbReference type="PDBsum" id="5GY7"/>
<dbReference type="SMR" id="P09147"/>
<dbReference type="BioGRID" id="4261900">
    <property type="interactions" value="147"/>
</dbReference>
<dbReference type="BioGRID" id="849730">
    <property type="interactions" value="12"/>
</dbReference>
<dbReference type="DIP" id="DIP-9728N"/>
<dbReference type="FunCoup" id="P09147">
    <property type="interactions" value="650"/>
</dbReference>
<dbReference type="IntAct" id="P09147">
    <property type="interactions" value="15"/>
</dbReference>
<dbReference type="STRING" id="511145.b0759"/>
<dbReference type="DrugBank" id="DB02790">
    <property type="generic name" value="Phenyl-uridine-5'-diphosphate"/>
</dbReference>
<dbReference type="DrugBank" id="DB01861">
    <property type="generic name" value="Uridine diphosphate glucose"/>
</dbReference>
<dbReference type="DrugBank" id="DB03435">
    <property type="generic name" value="Uridine-5'-Diphosphate"/>
</dbReference>
<dbReference type="DrugBank" id="DB04097">
    <property type="generic name" value="Uridine-5'-diphosphate-4-deoxy-4-fluoro-alpha-D-galactose"/>
</dbReference>
<dbReference type="DrugBank" id="DB02421">
    <property type="generic name" value="Uridine-5'-diphosphate-mannose"/>
</dbReference>
<dbReference type="DrugBank" id="DB03397">
    <property type="generic name" value="Uridine-Diphosphate-N-Acetylglucosamine"/>
</dbReference>
<dbReference type="jPOST" id="P09147"/>
<dbReference type="PaxDb" id="511145-b0759"/>
<dbReference type="EnsemblBacteria" id="AAC73846">
    <property type="protein sequence ID" value="AAC73846"/>
    <property type="gene ID" value="b0759"/>
</dbReference>
<dbReference type="GeneID" id="945354"/>
<dbReference type="KEGG" id="ecj:JW0742"/>
<dbReference type="KEGG" id="eco:b0759"/>
<dbReference type="PATRIC" id="fig|1411691.4.peg.1519"/>
<dbReference type="EchoBASE" id="EB0357"/>
<dbReference type="eggNOG" id="COG1087">
    <property type="taxonomic scope" value="Bacteria"/>
</dbReference>
<dbReference type="HOGENOM" id="CLU_007383_1_10_6"/>
<dbReference type="InParanoid" id="P09147"/>
<dbReference type="OMA" id="GEHLICN"/>
<dbReference type="OrthoDB" id="9803010at2"/>
<dbReference type="PhylomeDB" id="P09147"/>
<dbReference type="BioCyc" id="EcoCyc:UDPGLUCEPIM-MONOMER"/>
<dbReference type="BioCyc" id="MetaCyc:UDPGLUCEPIM-MONOMER"/>
<dbReference type="BRENDA" id="5.1.3.2">
    <property type="organism ID" value="2026"/>
</dbReference>
<dbReference type="SABIO-RK" id="P09147"/>
<dbReference type="UniPathway" id="UPA00214"/>
<dbReference type="EvolutionaryTrace" id="P09147"/>
<dbReference type="PRO" id="PR:P09147"/>
<dbReference type="Proteomes" id="UP000000625">
    <property type="component" value="Chromosome"/>
</dbReference>
<dbReference type="GO" id="GO:0005737">
    <property type="term" value="C:cytoplasm"/>
    <property type="evidence" value="ECO:0000314"/>
    <property type="project" value="EcoliWiki"/>
</dbReference>
<dbReference type="GO" id="GO:0005829">
    <property type="term" value="C:cytosol"/>
    <property type="evidence" value="ECO:0000314"/>
    <property type="project" value="EcoCyc"/>
</dbReference>
<dbReference type="GO" id="GO:0042802">
    <property type="term" value="F:identical protein binding"/>
    <property type="evidence" value="ECO:0000353"/>
    <property type="project" value="IntAct"/>
</dbReference>
<dbReference type="GO" id="GO:0070403">
    <property type="term" value="F:NAD+ binding"/>
    <property type="evidence" value="ECO:0000314"/>
    <property type="project" value="EcoCyc"/>
</dbReference>
<dbReference type="GO" id="GO:0016857">
    <property type="term" value="F:racemase and epimerase activity, acting on carbohydrates and derivatives"/>
    <property type="evidence" value="ECO:0000314"/>
    <property type="project" value="EcoliWiki"/>
</dbReference>
<dbReference type="GO" id="GO:0003978">
    <property type="term" value="F:UDP-glucose 4-epimerase activity"/>
    <property type="evidence" value="ECO:0000314"/>
    <property type="project" value="EcoCyc"/>
</dbReference>
<dbReference type="GO" id="GO:0005975">
    <property type="term" value="P:carbohydrate metabolic process"/>
    <property type="evidence" value="ECO:0000315"/>
    <property type="project" value="EcoliWiki"/>
</dbReference>
<dbReference type="GO" id="GO:0009242">
    <property type="term" value="P:colanic acid biosynthetic process"/>
    <property type="evidence" value="ECO:0000315"/>
    <property type="project" value="EcoCyc"/>
</dbReference>
<dbReference type="GO" id="GO:0033499">
    <property type="term" value="P:galactose catabolic process via UDP-galactose, Leloir pathway"/>
    <property type="evidence" value="ECO:0000315"/>
    <property type="project" value="EcoCyc"/>
</dbReference>
<dbReference type="GO" id="GO:0006012">
    <property type="term" value="P:galactose metabolic process"/>
    <property type="evidence" value="ECO:0000314"/>
    <property type="project" value="EcoliWiki"/>
</dbReference>
<dbReference type="GO" id="GO:0005996">
    <property type="term" value="P:monosaccharide metabolic process"/>
    <property type="evidence" value="ECO:0000318"/>
    <property type="project" value="GO_Central"/>
</dbReference>
<dbReference type="CDD" id="cd05247">
    <property type="entry name" value="UDP_G4E_1_SDR_e"/>
    <property type="match status" value="1"/>
</dbReference>
<dbReference type="FunFam" id="3.40.50.720:FF:000040">
    <property type="entry name" value="UDP-glucose 4-epimerase"/>
    <property type="match status" value="1"/>
</dbReference>
<dbReference type="Gene3D" id="3.40.50.720">
    <property type="entry name" value="NAD(P)-binding Rossmann-like Domain"/>
    <property type="match status" value="1"/>
</dbReference>
<dbReference type="Gene3D" id="3.90.25.10">
    <property type="entry name" value="UDP-galactose 4-epimerase, domain 1"/>
    <property type="match status" value="1"/>
</dbReference>
<dbReference type="InterPro" id="IPR001509">
    <property type="entry name" value="Epimerase_deHydtase"/>
</dbReference>
<dbReference type="InterPro" id="IPR036291">
    <property type="entry name" value="NAD(P)-bd_dom_sf"/>
</dbReference>
<dbReference type="InterPro" id="IPR005886">
    <property type="entry name" value="UDP_G4E"/>
</dbReference>
<dbReference type="NCBIfam" id="TIGR01179">
    <property type="entry name" value="galE"/>
    <property type="match status" value="1"/>
</dbReference>
<dbReference type="NCBIfam" id="NF007956">
    <property type="entry name" value="PRK10675.1"/>
    <property type="match status" value="1"/>
</dbReference>
<dbReference type="PANTHER" id="PTHR43725">
    <property type="entry name" value="UDP-GLUCOSE 4-EPIMERASE"/>
    <property type="match status" value="1"/>
</dbReference>
<dbReference type="PANTHER" id="PTHR43725:SF47">
    <property type="entry name" value="UDP-GLUCOSE 4-EPIMERASE"/>
    <property type="match status" value="1"/>
</dbReference>
<dbReference type="Pfam" id="PF01370">
    <property type="entry name" value="Epimerase"/>
    <property type="match status" value="1"/>
</dbReference>
<dbReference type="SUPFAM" id="SSF51735">
    <property type="entry name" value="NAD(P)-binding Rossmann-fold domains"/>
    <property type="match status" value="1"/>
</dbReference>
<keyword id="KW-0002">3D-structure</keyword>
<keyword id="KW-0119">Carbohydrate metabolism</keyword>
<keyword id="KW-0299">Galactose metabolism</keyword>
<keyword id="KW-0413">Isomerase</keyword>
<keyword id="KW-0520">NAD</keyword>
<keyword id="KW-1185">Reference proteome</keyword>
<proteinExistence type="evidence at protein level"/>
<gene>
    <name type="primary">galE</name>
    <name type="synonym">galD</name>
    <name type="ordered locus">b0759</name>
    <name type="ordered locus">JW0742</name>
</gene>
<accession>P09147</accession>
<accession>Q47493</accession>
<organism>
    <name type="scientific">Escherichia coli (strain K12)</name>
    <dbReference type="NCBI Taxonomy" id="83333"/>
    <lineage>
        <taxon>Bacteria</taxon>
        <taxon>Pseudomonadati</taxon>
        <taxon>Pseudomonadota</taxon>
        <taxon>Gammaproteobacteria</taxon>
        <taxon>Enterobacterales</taxon>
        <taxon>Enterobacteriaceae</taxon>
        <taxon>Escherichia</taxon>
    </lineage>
</organism>
<reference key="1">
    <citation type="journal article" date="1986" name="Nucleic Acids Res.">
        <title>Nucleotide sequences of the gal E gene and the gal T gene of E. coli.</title>
        <authorList>
            <person name="Lemaire H.-G."/>
            <person name="Mueller-Hill B."/>
        </authorList>
    </citation>
    <scope>NUCLEOTIDE SEQUENCE [GENOMIC DNA]</scope>
</reference>
<reference key="2">
    <citation type="submission" date="1988-04" db="EMBL/GenBank/DDBJ databases">
        <authorList>
            <person name="Lemaire H.-G."/>
        </authorList>
    </citation>
    <scope>SEQUENCE REVISION</scope>
</reference>
<reference key="3">
    <citation type="journal article" date="1996" name="DNA Res.">
        <title>A 718-kb DNA sequence of the Escherichia coli K-12 genome corresponding to the 12.7-28.0 min region on the linkage map.</title>
        <authorList>
            <person name="Oshima T."/>
            <person name="Aiba H."/>
            <person name="Baba T."/>
            <person name="Fujita K."/>
            <person name="Hayashi K."/>
            <person name="Honjo A."/>
            <person name="Ikemoto K."/>
            <person name="Inada T."/>
            <person name="Itoh T."/>
            <person name="Kajihara M."/>
            <person name="Kanai K."/>
            <person name="Kashimoto K."/>
            <person name="Kimura S."/>
            <person name="Kitagawa M."/>
            <person name="Makino K."/>
            <person name="Masuda S."/>
            <person name="Miki T."/>
            <person name="Mizobuchi K."/>
            <person name="Mori H."/>
            <person name="Motomura K."/>
            <person name="Nakamura Y."/>
            <person name="Nashimoto H."/>
            <person name="Nishio Y."/>
            <person name="Saito N."/>
            <person name="Sampei G."/>
            <person name="Seki Y."/>
            <person name="Tagami H."/>
            <person name="Takemoto K."/>
            <person name="Wada C."/>
            <person name="Yamamoto Y."/>
            <person name="Yano M."/>
            <person name="Horiuchi T."/>
        </authorList>
    </citation>
    <scope>NUCLEOTIDE SEQUENCE [LARGE SCALE GENOMIC DNA]</scope>
    <source>
        <strain>K12 / W3110 / ATCC 27325 / DSM 5911</strain>
    </source>
</reference>
<reference key="4">
    <citation type="journal article" date="1997" name="Science">
        <title>The complete genome sequence of Escherichia coli K-12.</title>
        <authorList>
            <person name="Blattner F.R."/>
            <person name="Plunkett G. III"/>
            <person name="Bloch C.A."/>
            <person name="Perna N.T."/>
            <person name="Burland V."/>
            <person name="Riley M."/>
            <person name="Collado-Vides J."/>
            <person name="Glasner J.D."/>
            <person name="Rode C.K."/>
            <person name="Mayhew G.F."/>
            <person name="Gregor J."/>
            <person name="Davis N.W."/>
            <person name="Kirkpatrick H.A."/>
            <person name="Goeden M.A."/>
            <person name="Rose D.J."/>
            <person name="Mau B."/>
            <person name="Shao Y."/>
        </authorList>
    </citation>
    <scope>NUCLEOTIDE SEQUENCE [LARGE SCALE GENOMIC DNA]</scope>
    <source>
        <strain>K12 / MG1655 / ATCC 47076</strain>
    </source>
</reference>
<reference key="5">
    <citation type="journal article" date="2006" name="Mol. Syst. Biol.">
        <title>Highly accurate genome sequences of Escherichia coli K-12 strains MG1655 and W3110.</title>
        <authorList>
            <person name="Hayashi K."/>
            <person name="Morooka N."/>
            <person name="Yamamoto Y."/>
            <person name="Fujita K."/>
            <person name="Isono K."/>
            <person name="Choi S."/>
            <person name="Ohtsubo E."/>
            <person name="Baba T."/>
            <person name="Wanner B.L."/>
            <person name="Mori H."/>
            <person name="Horiuchi T."/>
        </authorList>
    </citation>
    <scope>NUCLEOTIDE SEQUENCE [LARGE SCALE GENOMIC DNA]</scope>
    <source>
        <strain>K12 / W3110 / ATCC 27325 / DSM 5911</strain>
    </source>
</reference>
<reference key="6">
    <citation type="journal article" date="1990" name="DNA Seq.">
        <title>Completed sequence of pKG1800, a vector for determination of transcription terminators.</title>
        <authorList>
            <person name="Bernardi F."/>
            <person name="Bernardi A."/>
        </authorList>
    </citation>
    <scope>NUCLEOTIDE SEQUENCE [GENOMIC DNA] OF 1-146</scope>
</reference>
<reference key="7">
    <citation type="journal article" date="1995" name="Microbiol. Res.">
        <title>Molecular analysis of the molybdate uptake operon, modABCD, of Escherichia coli and modR, a regulatory gene.</title>
        <authorList>
            <person name="Walkenhorst H.M."/>
            <person name="Hemschemeier S.K."/>
            <person name="Eichenlaub R."/>
        </authorList>
    </citation>
    <scope>NUCLEOTIDE SEQUENCE [GENOMIC DNA] OF 1-31</scope>
    <source>
        <strain>K12</strain>
    </source>
</reference>
<reference key="8">
    <citation type="journal article" date="1983" name="Gene">
        <title>Segment-specific mutagenesis of the regulatory region in the Escherichia coli galactose operon: isolation of mutations reducing the initiation of transcription and translation.</title>
        <authorList>
            <person name="Busby S."/>
            <person name="Dreyfus M."/>
        </authorList>
    </citation>
    <scope>NUCLEOTIDE SEQUENCE [GENOMIC DNA] OF 1-6</scope>
</reference>
<reference key="9">
    <citation type="journal article" date="1964" name="J. Biol. Chem.">
        <title>The enzymes of the galactose operon in Escherichia coli. I. Purification and characterization of uridine diphosphogalactose 4-epimerase.</title>
        <authorList>
            <person name="Wilson D.B."/>
            <person name="Hogness D.S."/>
        </authorList>
    </citation>
    <scope>FUNCTION</scope>
    <scope>CATALYTIC ACTIVITY</scope>
    <scope>BIOPHYSICOCHEMICAL PROPERTIES</scope>
    <scope>INDUCTION</scope>
</reference>
<reference key="10">
    <citation type="journal article" date="1969" name="J. Biol. Chem.">
        <title>The enzymes of the galactose operon in Escherichia coli. II. The subunits of uridine diphosphogalactose 4-epimerase.</title>
        <authorList>
            <person name="Wilson D.B."/>
            <person name="Hogness D.S."/>
        </authorList>
    </citation>
    <scope>SUBUNIT</scope>
</reference>
<reference key="11">
    <citation type="journal article" date="1993" name="Biochemistry">
        <title>Identification of lysine 153 as a functionally important residue in UDP-galactose 4-epimerase from Escherichia coli.</title>
        <authorList>
            <person name="Swanson B.A."/>
            <person name="Frey P.A."/>
        </authorList>
    </citation>
    <scope>MUTAGENESIS OF LYS-153</scope>
    <scope>BIOPHYSICOCHEMICAL PROPERTIES</scope>
    <scope>COFACTOR</scope>
</reference>
<reference key="12">
    <citation type="journal article" date="1996" name="Biochemistry">
        <title>UDP-galactose 4-epimerase: NAD+ content and a charge-transfer band associated with the substrate-induced conformational transition.</title>
        <authorList>
            <person name="Liu Y."/>
            <person name="Vanhooke J.L."/>
            <person name="Frey P.A."/>
        </authorList>
    </citation>
    <scope>COFACTOR</scope>
    <scope>SUBUNIT</scope>
</reference>
<reference key="13">
    <citation type="journal article" date="1992" name="Proteins">
        <title>The molecular structure of UDP-galactose 4-epimerase from Escherichia coli determined at 2.5-A resolution.</title>
        <authorList>
            <person name="Bauer A.J."/>
            <person name="Rayment I."/>
            <person name="Frey P.A."/>
            <person name="Holden H.M."/>
        </authorList>
    </citation>
    <scope>X-RAY CRYSTALLOGRAPHY (2.5 ANGSTROMS) IN COMPLEX WITH NAD AND SUBSTRATE ANALOGS</scope>
    <scope>ACTIVITY REGULATION</scope>
    <scope>SUBUNIT</scope>
</reference>
<reference key="14">
    <citation type="journal article" date="1996" name="Biochemistry">
        <title>Crystal structures of the oxidized and reduced forms of UDP-galactose 4-epimerase isolated from Escherichia coli.</title>
        <authorList>
            <person name="Thoden J.B."/>
            <person name="Frey P.A."/>
            <person name="Holden H.M."/>
        </authorList>
    </citation>
    <scope>X-RAY CRYSTALLOGRAPHY (1.8 ANGSTROMS) IN COMPLEX WITH NAD AND SUBSTRATE ANALOGS</scope>
    <scope>COFACTOR</scope>
</reference>
<reference key="15">
    <citation type="journal article" date="1996" name="Biochemistry">
        <title>Molecular structure of the NADH/UDP-glucose abortive complex of UDP-galactose 4-epimerase from Escherichia coli: implications for the catalytic mechanism.</title>
        <authorList>
            <person name="Thoden J.B."/>
            <person name="Frey P.A."/>
            <person name="Holden H.M."/>
        </authorList>
    </citation>
    <scope>X-RAY CRYSTALLOGRAPHY (1.8 ANGSTROMS) IN COMPLEX WITH NAD AND SUBSTRATE ANALOGS</scope>
    <scope>ACTIVE SITE</scope>
    <scope>COFACTOR</scope>
</reference>
<reference key="16">
    <citation type="journal article" date="1996" name="Protein Sci.">
        <title>High-resolution X-ray structure of UDP-galactose 4-epimerase complexed with UDP-phenol.</title>
        <authorList>
            <person name="Thoden J.B."/>
            <person name="Frey P.A."/>
            <person name="Holden H.M."/>
        </authorList>
    </citation>
    <scope>X-RAY CRYSTALLOGRAPHY (1.8 ANGSTROMS) IN COMPLEX WITH NAD AND SUBSTRATE ANALOGS</scope>
    <scope>COFACTOR</scope>
    <scope>SUBUNIT</scope>
</reference>
<reference key="17">
    <citation type="journal article" date="1997" name="Biochemistry">
        <title>Structural analysis of UDP-sugar binding to UDP-galactose 4-epimerase from Escherichia coli.</title>
        <authorList>
            <person name="Thoden J.B."/>
            <person name="Hegeman A.D."/>
            <person name="Wesenberg G."/>
            <person name="Chapeau M.C."/>
            <person name="Frey P.A."/>
            <person name="Holden H.M."/>
        </authorList>
    </citation>
    <scope>X-RAY CRYSTALLOGRAPHY (1.65 ANGSTROMS) IN COMPLEX WITH NAD AND SUBSTRATE ANALOGS</scope>
    <scope>COFACTOR</scope>
</reference>
<reference key="18">
    <citation type="journal article" date="1997" name="Biochemistry">
        <title>Mechanistic roles of tyrosine 149 and serine 124 in UDP-galactose 4-epimerase from Escherichia coli.</title>
        <authorList>
            <person name="Liu Y."/>
            <person name="Thoden J.B."/>
            <person name="Kim J."/>
            <person name="Berger E."/>
            <person name="Gulick A.M."/>
            <person name="Ruzicka F.J."/>
            <person name="Holden H.M."/>
            <person name="Frey P.A."/>
        </authorList>
    </citation>
    <scope>X-RAY CRYSTALLOGRAPHY (1.90 ANGSTROMS) OF MUTANT PHE-149 IN COMPLEX WITH SUBSTRATE ANALOGS AND NAD</scope>
    <scope>MUTAGENESIS OF SER-124 AND TYR-149</scope>
    <scope>BIOPHYSICOCHEMICAL PROPERTIES</scope>
    <scope>REACTION MECHANISM</scope>
    <scope>ACTIVITY REGULATION</scope>
</reference>
<reference key="19">
    <citation type="journal article" date="1997" name="Biochemistry">
        <title>Molecular structures of the S124A, S124T, and S124V site-directed mutants of UDP-galactose 4-epimerase from Escherichia coli.</title>
        <authorList>
            <person name="Thoden J.B."/>
            <person name="Gulick A.M."/>
            <person name="Holden H.M."/>
        </authorList>
    </citation>
    <scope>X-RAY CRYSTALLOGRAPHY (1.9 ANGSTROMS) OF MUTANTS ALA-124; THR-124 AND VAL-124 IN COMPLEX WITH SUBSTRATE ANALOGS AND NAD</scope>
    <scope>MUTAGENESIS OF SER-124</scope>
</reference>
<reference key="20">
    <citation type="journal article" date="1998" name="Biochemistry">
        <title>Dramatic differences in the binding of UDP-galactose and UDP-glucose to UDP-galactose 4-epimerase from Escherichia coli.</title>
        <authorList>
            <person name="Thoden J.B."/>
            <person name="Holden H.M."/>
        </authorList>
    </citation>
    <scope>X-RAY CRYSTALLOGRAPHY (1.8 ANGSTROMS) OF DOUBLE MUTANT ALA-124/PHE-149 IN COMPLEX WITH SUBSTRATE ANALOGS AND NAD</scope>
    <scope>MUTAGENESIS OF SER-124 AND TYR-149</scope>
    <scope>REACTION MECHANISM</scope>
    <scope>COFACTOR</scope>
</reference>
<reference key="21">
    <citation type="journal article" date="2002" name="J. Biol. Chem.">
        <title>Structural analysis of the Y299C mutant of Escherichia coli UDP-galactose 4-epimerase. Teaching an old dog new tricks.</title>
        <authorList>
            <person name="Thoden J.B."/>
            <person name="Henderson J.M."/>
            <person name="Fridovich-Keil J.L."/>
            <person name="Holden H.M."/>
        </authorList>
    </citation>
    <scope>X-RAY CRYSTALLOGRAPHY (1.75 ANGSTROMS) OF MUTANT CYS-299 IN COMPLEX WITH SUBSTRATE ANALOGS AND NAD</scope>
    <scope>MUTAGENESIS OF TYR-299</scope>
    <scope>SUBSTRATE SPECIFICITY</scope>
    <scope>COFACTOR</scope>
</reference>
<comment type="function">
    <text evidence="2">Involved in the metabolism of galactose. Catalyzes the conversion of UDP-galactose (UDP-Gal) to UDP-glucose (UDP-Glc) through a mechanism involving the transient reduction of NAD. It is only active on UDP-galactose and UDP-glucose.</text>
</comment>
<comment type="catalytic activity">
    <reaction evidence="2">
        <text>UDP-alpha-D-glucose = UDP-alpha-D-galactose</text>
        <dbReference type="Rhea" id="RHEA:22168"/>
        <dbReference type="ChEBI" id="CHEBI:58885"/>
        <dbReference type="ChEBI" id="CHEBI:66914"/>
        <dbReference type="EC" id="5.1.3.2"/>
    </reaction>
</comment>
<comment type="cofactor">
    <cofactor evidence="1 5 6 7 8 9 10 13">
        <name>NAD(+)</name>
        <dbReference type="ChEBI" id="CHEBI:57540"/>
    </cofactor>
</comment>
<comment type="activity regulation">
    <text evidence="3 11">Inhibited by UDP-phenol and NaBH3CN.</text>
</comment>
<comment type="biophysicochemical properties">
    <kinetics>
        <KM evidence="2 5 11">18 uM for UDP-Gal (at pH 8.5)</KM>
        <KM evidence="2 5 11">160 uM for UDP-Gal (at pH 8.5 and 27 degrees Celsius)</KM>
        <KM evidence="2 5 11">225 uM for UDP-Glc (at pH 8.5 and 27 degrees Celsius)</KM>
        <text>kcat is 760 sec(-1) for UDP-Glc (at pH 8.5 and 27 degrees Celsius) and 24 sec(-1) for UDP-Gal (at pH 8.5).</text>
    </kinetics>
</comment>
<comment type="pathway">
    <text>Carbohydrate metabolism; galactose metabolism.</text>
</comment>
<comment type="subunit">
    <text evidence="1 3 4 6 7 8 9 10 11 12 13">Homodimer.</text>
</comment>
<comment type="interaction">
    <interactant intactId="EBI-909010">
        <id>P09147</id>
    </interactant>
    <interactant intactId="EBI-909010">
        <id>P09147</id>
        <label>galE</label>
    </interactant>
    <organismsDiffer>false</organismsDiffer>
    <experiments>3</experiments>
</comment>
<comment type="interaction">
    <interactant intactId="EBI-909010">
        <id>P09147</id>
    </interactant>
    <interactant intactId="EBI-9132384">
        <id>P39409</id>
        <label>yjjW</label>
    </interactant>
    <organismsDiffer>false</organismsDiffer>
    <experiments>2</experiments>
</comment>
<comment type="induction">
    <text evidence="2">By D-galactose and D-fucose.</text>
</comment>
<comment type="similarity">
    <text evidence="14">Belongs to the NAD(P)-dependent epimerase/dehydratase family.</text>
</comment>
<evidence type="ECO:0000269" key="1">
    <source>
    </source>
</evidence>
<evidence type="ECO:0000269" key="2">
    <source>
    </source>
</evidence>
<evidence type="ECO:0000269" key="3">
    <source>
    </source>
</evidence>
<evidence type="ECO:0000269" key="4">
    <source>
    </source>
</evidence>
<evidence type="ECO:0000269" key="5">
    <source>
    </source>
</evidence>
<evidence type="ECO:0000269" key="6">
    <source>
    </source>
</evidence>
<evidence type="ECO:0000269" key="7">
    <source>
    </source>
</evidence>
<evidence type="ECO:0000269" key="8">
    <source>
    </source>
</evidence>
<evidence type="ECO:0000269" key="9">
    <source>
    </source>
</evidence>
<evidence type="ECO:0000269" key="10">
    <source>
    </source>
</evidence>
<evidence type="ECO:0000269" key="11">
    <source>
    </source>
</evidence>
<evidence type="ECO:0000269" key="12">
    <source>
    </source>
</evidence>
<evidence type="ECO:0000269" key="13">
    <source>
    </source>
</evidence>
<evidence type="ECO:0000305" key="14"/>
<evidence type="ECO:0007829" key="15">
    <source>
        <dbReference type="PDB" id="5GY7"/>
    </source>
</evidence>
<name>GALE_ECOLI</name>
<protein>
    <recommendedName>
        <fullName>UDP-glucose 4-epimerase</fullName>
        <ecNumber>5.1.3.2</ecNumber>
    </recommendedName>
    <alternativeName>
        <fullName>Galactowaldenase</fullName>
    </alternativeName>
    <alternativeName>
        <fullName>UDP-galactose 4-epimerase</fullName>
    </alternativeName>
</protein>